<dbReference type="EMBL" id="BX936398">
    <property type="protein sequence ID" value="CAH21310.1"/>
    <property type="molecule type" value="Genomic_DNA"/>
</dbReference>
<dbReference type="RefSeq" id="WP_002211688.1">
    <property type="nucleotide sequence ID" value="NZ_CP009712.1"/>
</dbReference>
<dbReference type="SMR" id="Q66AQ8"/>
<dbReference type="GeneID" id="96665563"/>
<dbReference type="KEGG" id="ypo:BZ17_392"/>
<dbReference type="KEGG" id="yps:YPTB2072"/>
<dbReference type="PATRIC" id="fig|273123.14.peg.419"/>
<dbReference type="Proteomes" id="UP000001011">
    <property type="component" value="Chromosome"/>
</dbReference>
<dbReference type="GO" id="GO:0005737">
    <property type="term" value="C:cytoplasm"/>
    <property type="evidence" value="ECO:0007669"/>
    <property type="project" value="UniProtKB-SubCell"/>
</dbReference>
<dbReference type="GO" id="GO:0003677">
    <property type="term" value="F:DNA binding"/>
    <property type="evidence" value="ECO:0007669"/>
    <property type="project" value="UniProtKB-KW"/>
</dbReference>
<dbReference type="GO" id="GO:0003700">
    <property type="term" value="F:DNA-binding transcription factor activity"/>
    <property type="evidence" value="ECO:0007669"/>
    <property type="project" value="UniProtKB-UniRule"/>
</dbReference>
<dbReference type="GO" id="GO:0000062">
    <property type="term" value="F:fatty-acyl-CoA binding"/>
    <property type="evidence" value="ECO:0007669"/>
    <property type="project" value="InterPro"/>
</dbReference>
<dbReference type="GO" id="GO:0006631">
    <property type="term" value="P:fatty acid metabolic process"/>
    <property type="evidence" value="ECO:0007669"/>
    <property type="project" value="UniProtKB-KW"/>
</dbReference>
<dbReference type="GO" id="GO:0019217">
    <property type="term" value="P:regulation of fatty acid metabolic process"/>
    <property type="evidence" value="ECO:0007669"/>
    <property type="project" value="UniProtKB-UniRule"/>
</dbReference>
<dbReference type="CDD" id="cd07377">
    <property type="entry name" value="WHTH_GntR"/>
    <property type="match status" value="1"/>
</dbReference>
<dbReference type="FunFam" id="1.10.10.10:FF:000036">
    <property type="entry name" value="Fatty acid metabolism regulator protein"/>
    <property type="match status" value="1"/>
</dbReference>
<dbReference type="Gene3D" id="1.20.120.530">
    <property type="entry name" value="GntR ligand-binding domain-like"/>
    <property type="match status" value="1"/>
</dbReference>
<dbReference type="Gene3D" id="1.10.10.10">
    <property type="entry name" value="Winged helix-like DNA-binding domain superfamily/Winged helix DNA-binding domain"/>
    <property type="match status" value="1"/>
</dbReference>
<dbReference type="HAMAP" id="MF_00696">
    <property type="entry name" value="HTH_FadR"/>
    <property type="match status" value="1"/>
</dbReference>
<dbReference type="InterPro" id="IPR014178">
    <property type="entry name" value="FA-response_TF_FadR"/>
</dbReference>
<dbReference type="InterPro" id="IPR028374">
    <property type="entry name" value="FadR_C"/>
</dbReference>
<dbReference type="InterPro" id="IPR008920">
    <property type="entry name" value="TF_FadR/GntR_C"/>
</dbReference>
<dbReference type="InterPro" id="IPR000524">
    <property type="entry name" value="Tscrpt_reg_HTH_GntR"/>
</dbReference>
<dbReference type="InterPro" id="IPR036388">
    <property type="entry name" value="WH-like_DNA-bd_sf"/>
</dbReference>
<dbReference type="InterPro" id="IPR036390">
    <property type="entry name" value="WH_DNA-bd_sf"/>
</dbReference>
<dbReference type="NCBIfam" id="TIGR02812">
    <property type="entry name" value="fadR_gamma"/>
    <property type="match status" value="1"/>
</dbReference>
<dbReference type="NCBIfam" id="NF003444">
    <property type="entry name" value="PRK04984.1"/>
    <property type="match status" value="1"/>
</dbReference>
<dbReference type="PANTHER" id="PTHR43537:SF52">
    <property type="entry name" value="FATTY ACID METABOLISM REGULATOR PROTEIN"/>
    <property type="match status" value="1"/>
</dbReference>
<dbReference type="PANTHER" id="PTHR43537">
    <property type="entry name" value="TRANSCRIPTIONAL REGULATOR, GNTR FAMILY"/>
    <property type="match status" value="1"/>
</dbReference>
<dbReference type="Pfam" id="PF07840">
    <property type="entry name" value="FadR_C"/>
    <property type="match status" value="1"/>
</dbReference>
<dbReference type="Pfam" id="PF00392">
    <property type="entry name" value="GntR"/>
    <property type="match status" value="1"/>
</dbReference>
<dbReference type="PRINTS" id="PR00035">
    <property type="entry name" value="HTHGNTR"/>
</dbReference>
<dbReference type="SMART" id="SM00345">
    <property type="entry name" value="HTH_GNTR"/>
    <property type="match status" value="1"/>
</dbReference>
<dbReference type="SUPFAM" id="SSF48008">
    <property type="entry name" value="GntR ligand-binding domain-like"/>
    <property type="match status" value="1"/>
</dbReference>
<dbReference type="SUPFAM" id="SSF46785">
    <property type="entry name" value="Winged helix' DNA-binding domain"/>
    <property type="match status" value="1"/>
</dbReference>
<dbReference type="PROSITE" id="PS50949">
    <property type="entry name" value="HTH_GNTR"/>
    <property type="match status" value="1"/>
</dbReference>
<sequence length="239" mass="26902">MVIKAQSPAGFAEEYIIESIWNNRFPPGSILPAERELSELIGVTRTTLREVLQRLARDGWLTIQHGKPTKVNNFWETSGLNILETLARLDHDSVPQLIDNLLAVRTNIATIFVRTAIRHHPEKAQEILARAKTVDDNAEAFTALDYGIFRGLAFASGNPIYGLILNGLKGLYTRVGRYYFSNPEARKLALTFYNKLSTLCDTESYDQVLECLRTYGKESGAIWHSMQGTMPSDLAEARR</sequence>
<keyword id="KW-0010">Activator</keyword>
<keyword id="KW-0963">Cytoplasm</keyword>
<keyword id="KW-0238">DNA-binding</keyword>
<keyword id="KW-0276">Fatty acid metabolism</keyword>
<keyword id="KW-0443">Lipid metabolism</keyword>
<keyword id="KW-0678">Repressor</keyword>
<keyword id="KW-0804">Transcription</keyword>
<keyword id="KW-0805">Transcription regulation</keyword>
<organism>
    <name type="scientific">Yersinia pseudotuberculosis serotype I (strain IP32953)</name>
    <dbReference type="NCBI Taxonomy" id="273123"/>
    <lineage>
        <taxon>Bacteria</taxon>
        <taxon>Pseudomonadati</taxon>
        <taxon>Pseudomonadota</taxon>
        <taxon>Gammaproteobacteria</taxon>
        <taxon>Enterobacterales</taxon>
        <taxon>Yersiniaceae</taxon>
        <taxon>Yersinia</taxon>
    </lineage>
</organism>
<reference key="1">
    <citation type="journal article" date="2004" name="Proc. Natl. Acad. Sci. U.S.A.">
        <title>Insights into the evolution of Yersinia pestis through whole-genome comparison with Yersinia pseudotuberculosis.</title>
        <authorList>
            <person name="Chain P.S.G."/>
            <person name="Carniel E."/>
            <person name="Larimer F.W."/>
            <person name="Lamerdin J."/>
            <person name="Stoutland P.O."/>
            <person name="Regala W.M."/>
            <person name="Georgescu A.M."/>
            <person name="Vergez L.M."/>
            <person name="Land M.L."/>
            <person name="Motin V.L."/>
            <person name="Brubaker R.R."/>
            <person name="Fowler J."/>
            <person name="Hinnebusch J."/>
            <person name="Marceau M."/>
            <person name="Medigue C."/>
            <person name="Simonet M."/>
            <person name="Chenal-Francisque V."/>
            <person name="Souza B."/>
            <person name="Dacheux D."/>
            <person name="Elliott J.M."/>
            <person name="Derbise A."/>
            <person name="Hauser L.J."/>
            <person name="Garcia E."/>
        </authorList>
    </citation>
    <scope>NUCLEOTIDE SEQUENCE [LARGE SCALE GENOMIC DNA]</scope>
    <source>
        <strain>IP32953</strain>
    </source>
</reference>
<comment type="function">
    <text evidence="1">Multifunctional regulator of fatty acid metabolism.</text>
</comment>
<comment type="subunit">
    <text evidence="1">Homodimer.</text>
</comment>
<comment type="subcellular location">
    <subcellularLocation>
        <location evidence="1">Cytoplasm</location>
    </subcellularLocation>
</comment>
<evidence type="ECO:0000255" key="1">
    <source>
        <dbReference type="HAMAP-Rule" id="MF_00696"/>
    </source>
</evidence>
<gene>
    <name evidence="1" type="primary">fadR</name>
    <name type="ordered locus">YPTB2072</name>
</gene>
<name>FADR_YERPS</name>
<protein>
    <recommendedName>
        <fullName evidence="1">Fatty acid metabolism regulator protein</fullName>
    </recommendedName>
</protein>
<accession>Q66AQ8</accession>
<feature type="chain" id="PRO_0000301521" description="Fatty acid metabolism regulator protein">
    <location>
        <begin position="1"/>
        <end position="239"/>
    </location>
</feature>
<feature type="domain" description="HTH gntR-type" evidence="1">
    <location>
        <begin position="6"/>
        <end position="74"/>
    </location>
</feature>
<feature type="DNA-binding region" description="H-T-H motif" evidence="1">
    <location>
        <begin position="34"/>
        <end position="53"/>
    </location>
</feature>
<proteinExistence type="inferred from homology"/>